<proteinExistence type="inferred from homology"/>
<accession>A7ZZ76</accession>
<protein>
    <recommendedName>
        <fullName evidence="1">N-acetyl-D-glucosamine kinase</fullName>
        <ecNumber evidence="1">2.7.1.59</ecNumber>
    </recommendedName>
    <alternativeName>
        <fullName evidence="1">GlcNAc kinase</fullName>
    </alternativeName>
</protein>
<keyword id="KW-0067">ATP-binding</keyword>
<keyword id="KW-0119">Carbohydrate metabolism</keyword>
<keyword id="KW-0418">Kinase</keyword>
<keyword id="KW-0479">Metal-binding</keyword>
<keyword id="KW-0547">Nucleotide-binding</keyword>
<keyword id="KW-0808">Transferase</keyword>
<keyword id="KW-0862">Zinc</keyword>
<feature type="chain" id="PRO_1000067380" description="N-acetyl-D-glucosamine kinase">
    <location>
        <begin position="1"/>
        <end position="303"/>
    </location>
</feature>
<feature type="binding site" evidence="1">
    <location>
        <begin position="4"/>
        <end position="11"/>
    </location>
    <ligand>
        <name>ATP</name>
        <dbReference type="ChEBI" id="CHEBI:30616"/>
    </ligand>
</feature>
<feature type="binding site" evidence="1">
    <location>
        <begin position="133"/>
        <end position="140"/>
    </location>
    <ligand>
        <name>ATP</name>
        <dbReference type="ChEBI" id="CHEBI:30616"/>
    </ligand>
</feature>
<feature type="binding site" evidence="1">
    <location>
        <position position="157"/>
    </location>
    <ligand>
        <name>Zn(2+)</name>
        <dbReference type="ChEBI" id="CHEBI:29105"/>
    </ligand>
</feature>
<feature type="binding site" evidence="1">
    <location>
        <position position="177"/>
    </location>
    <ligand>
        <name>Zn(2+)</name>
        <dbReference type="ChEBI" id="CHEBI:29105"/>
    </ligand>
</feature>
<feature type="binding site" evidence="1">
    <location>
        <position position="179"/>
    </location>
    <ligand>
        <name>Zn(2+)</name>
        <dbReference type="ChEBI" id="CHEBI:29105"/>
    </ligand>
</feature>
<feature type="binding site" evidence="1">
    <location>
        <position position="184"/>
    </location>
    <ligand>
        <name>Zn(2+)</name>
        <dbReference type="ChEBI" id="CHEBI:29105"/>
    </ligand>
</feature>
<gene>
    <name evidence="1" type="primary">nagK</name>
    <name type="ordered locus">EcHS_A1241</name>
</gene>
<reference key="1">
    <citation type="journal article" date="2008" name="J. Bacteriol.">
        <title>The pangenome structure of Escherichia coli: comparative genomic analysis of E. coli commensal and pathogenic isolates.</title>
        <authorList>
            <person name="Rasko D.A."/>
            <person name="Rosovitz M.J."/>
            <person name="Myers G.S.A."/>
            <person name="Mongodin E.F."/>
            <person name="Fricke W.F."/>
            <person name="Gajer P."/>
            <person name="Crabtree J."/>
            <person name="Sebaihia M."/>
            <person name="Thomson N.R."/>
            <person name="Chaudhuri R."/>
            <person name="Henderson I.R."/>
            <person name="Sperandio V."/>
            <person name="Ravel J."/>
        </authorList>
    </citation>
    <scope>NUCLEOTIDE SEQUENCE [LARGE SCALE GENOMIC DNA]</scope>
    <source>
        <strain>HS</strain>
    </source>
</reference>
<dbReference type="EC" id="2.7.1.59" evidence="1"/>
<dbReference type="EMBL" id="CP000802">
    <property type="protein sequence ID" value="ABV05580.1"/>
    <property type="molecule type" value="Genomic_DNA"/>
</dbReference>
<dbReference type="RefSeq" id="WP_000291268.1">
    <property type="nucleotide sequence ID" value="NC_009800.1"/>
</dbReference>
<dbReference type="SMR" id="A7ZZ76"/>
<dbReference type="KEGG" id="ecx:EcHS_A1241"/>
<dbReference type="HOGENOM" id="CLU_036604_0_3_6"/>
<dbReference type="UniPathway" id="UPA00544"/>
<dbReference type="GO" id="GO:0005524">
    <property type="term" value="F:ATP binding"/>
    <property type="evidence" value="ECO:0007669"/>
    <property type="project" value="UniProtKB-UniRule"/>
</dbReference>
<dbReference type="GO" id="GO:0045127">
    <property type="term" value="F:N-acetylglucosamine kinase activity"/>
    <property type="evidence" value="ECO:0007669"/>
    <property type="project" value="UniProtKB-UniRule"/>
</dbReference>
<dbReference type="GO" id="GO:0008270">
    <property type="term" value="F:zinc ion binding"/>
    <property type="evidence" value="ECO:0007669"/>
    <property type="project" value="UniProtKB-UniRule"/>
</dbReference>
<dbReference type="GO" id="GO:0006044">
    <property type="term" value="P:N-acetylglucosamine metabolic process"/>
    <property type="evidence" value="ECO:0007669"/>
    <property type="project" value="UniProtKB-UniRule"/>
</dbReference>
<dbReference type="GO" id="GO:0009254">
    <property type="term" value="P:peptidoglycan turnover"/>
    <property type="evidence" value="ECO:0007669"/>
    <property type="project" value="UniProtKB-UniRule"/>
</dbReference>
<dbReference type="CDD" id="cd24057">
    <property type="entry name" value="ASKHA_NBD_ROK_NAGK"/>
    <property type="match status" value="1"/>
</dbReference>
<dbReference type="FunFam" id="3.30.420.40:FF:000049">
    <property type="entry name" value="N-acetyl-D-glucosamine kinase"/>
    <property type="match status" value="1"/>
</dbReference>
<dbReference type="FunFam" id="3.30.420.40:FF:000051">
    <property type="entry name" value="N-acetyl-D-glucosamine kinase"/>
    <property type="match status" value="1"/>
</dbReference>
<dbReference type="Gene3D" id="3.30.420.40">
    <property type="match status" value="2"/>
</dbReference>
<dbReference type="HAMAP" id="MF_01271">
    <property type="entry name" value="GlcNAc_kinase"/>
    <property type="match status" value="1"/>
</dbReference>
<dbReference type="InterPro" id="IPR043129">
    <property type="entry name" value="ATPase_NBD"/>
</dbReference>
<dbReference type="InterPro" id="IPR023505">
    <property type="entry name" value="N-acetyl-D-glucosamine_kinase"/>
</dbReference>
<dbReference type="InterPro" id="IPR000600">
    <property type="entry name" value="ROK"/>
</dbReference>
<dbReference type="InterPro" id="IPR049874">
    <property type="entry name" value="ROK_cs"/>
</dbReference>
<dbReference type="NCBIfam" id="NF009835">
    <property type="entry name" value="PRK13310.1"/>
    <property type="match status" value="1"/>
</dbReference>
<dbReference type="PANTHER" id="PTHR18964:SF162">
    <property type="entry name" value="N-ACETYL-D-GLUCOSAMINE KINASE"/>
    <property type="match status" value="1"/>
</dbReference>
<dbReference type="PANTHER" id="PTHR18964">
    <property type="entry name" value="ROK (REPRESSOR, ORF, KINASE) FAMILY"/>
    <property type="match status" value="1"/>
</dbReference>
<dbReference type="Pfam" id="PF00480">
    <property type="entry name" value="ROK"/>
    <property type="match status" value="1"/>
</dbReference>
<dbReference type="SUPFAM" id="SSF53067">
    <property type="entry name" value="Actin-like ATPase domain"/>
    <property type="match status" value="1"/>
</dbReference>
<dbReference type="PROSITE" id="PS01125">
    <property type="entry name" value="ROK"/>
    <property type="match status" value="1"/>
</dbReference>
<evidence type="ECO:0000255" key="1">
    <source>
        <dbReference type="HAMAP-Rule" id="MF_01271"/>
    </source>
</evidence>
<organism>
    <name type="scientific">Escherichia coli O9:H4 (strain HS)</name>
    <dbReference type="NCBI Taxonomy" id="331112"/>
    <lineage>
        <taxon>Bacteria</taxon>
        <taxon>Pseudomonadati</taxon>
        <taxon>Pseudomonadota</taxon>
        <taxon>Gammaproteobacteria</taxon>
        <taxon>Enterobacterales</taxon>
        <taxon>Enterobacteriaceae</taxon>
        <taxon>Escherichia</taxon>
    </lineage>
</organism>
<comment type="function">
    <text evidence="1">Catalyzes the phosphorylation of N-acetyl-D-glucosamine (GlcNAc) derived from cell-wall degradation, yielding GlcNAc-6-P.</text>
</comment>
<comment type="catalytic activity">
    <reaction evidence="1">
        <text>N-acetyl-D-glucosamine + ATP = N-acetyl-D-glucosamine 6-phosphate + ADP + H(+)</text>
        <dbReference type="Rhea" id="RHEA:17417"/>
        <dbReference type="ChEBI" id="CHEBI:15378"/>
        <dbReference type="ChEBI" id="CHEBI:30616"/>
        <dbReference type="ChEBI" id="CHEBI:57513"/>
        <dbReference type="ChEBI" id="CHEBI:456216"/>
        <dbReference type="ChEBI" id="CHEBI:506227"/>
        <dbReference type="EC" id="2.7.1.59"/>
    </reaction>
</comment>
<comment type="pathway">
    <text evidence="1">Cell wall biogenesis; peptidoglycan recycling.</text>
</comment>
<comment type="similarity">
    <text evidence="1">Belongs to the ROK (NagC/XylR) family. NagK subfamily.</text>
</comment>
<sequence length="303" mass="33013">MYYGFDIGGTKIALGVFDSGRQLQWEKRVPTPRDSYDAFLDAVCELVAEADQRFGCKGSVGIGIPGMPETEDGTLYAANVPAASGKPLRADLSARLDRDVRLDNDANCFALSEAWDDEFTQYPLVMGLILGTGVGGGLIFNGKPITGKSYITGEFGHMRLPVDALTMMGLDFPLRRCGCGQHGCIENYLSGRGFAWLYQHYYHQPLQAPEIIALYDQGDEQARAHVERYLDLLAVCLGNILTIVDPDLVVIGGGLSNFPAITAQLADRLPRHLLPVARVPRIERARHGDAGGMRGAAFLHLTD</sequence>
<name>NAGK_ECOHS</name>